<reference key="1">
    <citation type="submission" date="2004-07" db="EMBL/GenBank/DDBJ databases">
        <authorList>
            <consortium name="NIH - Xenopus Gene Collection (XGC) project"/>
        </authorList>
    </citation>
    <scope>NUCLEOTIDE SEQUENCE [LARGE SCALE MRNA]</scope>
    <source>
        <tissue>Oocyte</tissue>
    </source>
</reference>
<feature type="chain" id="PRO_0000321916" description="Differentially expressed in FDCP 8 homolog A">
    <location>
        <begin position="1"/>
        <end position="443"/>
    </location>
</feature>
<feature type="zinc finger region" description="Phorbol-ester/DAG-type 1" evidence="2">
    <location>
        <begin position="134"/>
        <end position="185"/>
    </location>
</feature>
<feature type="zinc finger region" description="Phorbol-ester/DAG-type 2" evidence="2">
    <location>
        <begin position="364"/>
        <end position="424"/>
    </location>
</feature>
<feature type="region of interest" description="Disordered" evidence="3">
    <location>
        <begin position="1"/>
        <end position="49"/>
    </location>
</feature>
<gene>
    <name type="primary">def8-a</name>
</gene>
<accession>Q6DDJ3</accession>
<organism>
    <name type="scientific">Xenopus laevis</name>
    <name type="common">African clawed frog</name>
    <dbReference type="NCBI Taxonomy" id="8355"/>
    <lineage>
        <taxon>Eukaryota</taxon>
        <taxon>Metazoa</taxon>
        <taxon>Chordata</taxon>
        <taxon>Craniata</taxon>
        <taxon>Vertebrata</taxon>
        <taxon>Euteleostomi</taxon>
        <taxon>Amphibia</taxon>
        <taxon>Batrachia</taxon>
        <taxon>Anura</taxon>
        <taxon>Pipoidea</taxon>
        <taxon>Pipidae</taxon>
        <taxon>Xenopodinae</taxon>
        <taxon>Xenopus</taxon>
        <taxon>Xenopus</taxon>
    </lineage>
</organism>
<proteinExistence type="evidence at transcript level"/>
<protein>
    <recommendedName>
        <fullName>Differentially expressed in FDCP 8 homolog A</fullName>
        <shortName>DEF-8-A</shortName>
    </recommendedName>
</protein>
<name>DFI8A_XENLA</name>
<comment type="function">
    <text evidence="1">Positively regulates lysosome peripheral distribution and ruffled border formation in osteoclasts. Involved in bone resorption.</text>
</comment>
<comment type="similarity">
    <text evidence="4">Belongs to the DEF8 family.</text>
</comment>
<evidence type="ECO:0000250" key="1">
    <source>
        <dbReference type="UniProtKB" id="Q99J78"/>
    </source>
</evidence>
<evidence type="ECO:0000255" key="2">
    <source>
        <dbReference type="PROSITE-ProRule" id="PRU00226"/>
    </source>
</evidence>
<evidence type="ECO:0000256" key="3">
    <source>
        <dbReference type="SAM" id="MobiDB-lite"/>
    </source>
</evidence>
<evidence type="ECO:0000305" key="4"/>
<dbReference type="EMBL" id="BC077567">
    <property type="protein sequence ID" value="AAH77567.1"/>
    <property type="molecule type" value="mRNA"/>
</dbReference>
<dbReference type="RefSeq" id="NP_001086859.1">
    <property type="nucleotide sequence ID" value="NM_001093390.1"/>
</dbReference>
<dbReference type="SMR" id="Q6DDJ3"/>
<dbReference type="DNASU" id="446694"/>
<dbReference type="GeneID" id="446694"/>
<dbReference type="KEGG" id="xla:446694"/>
<dbReference type="AGR" id="Xenbase:XB-GENE-17345812"/>
<dbReference type="CTD" id="446694"/>
<dbReference type="Xenbase" id="XB-GENE-17345812">
    <property type="gene designation" value="def8.L"/>
</dbReference>
<dbReference type="OMA" id="NMICPKC"/>
<dbReference type="OrthoDB" id="1918044at2759"/>
<dbReference type="Proteomes" id="UP000186698">
    <property type="component" value="Chromosome 4L"/>
</dbReference>
<dbReference type="Bgee" id="446694">
    <property type="expression patterns" value="Expressed in spleen and 19 other cell types or tissues"/>
</dbReference>
<dbReference type="GO" id="GO:0008270">
    <property type="term" value="F:zinc ion binding"/>
    <property type="evidence" value="ECO:0007669"/>
    <property type="project" value="UniProtKB-KW"/>
</dbReference>
<dbReference type="GO" id="GO:0032418">
    <property type="term" value="P:lysosome localization"/>
    <property type="evidence" value="ECO:0000250"/>
    <property type="project" value="UniProtKB"/>
</dbReference>
<dbReference type="GO" id="GO:0045780">
    <property type="term" value="P:positive regulation of bone resorption"/>
    <property type="evidence" value="ECO:0000250"/>
    <property type="project" value="UniProtKB"/>
</dbReference>
<dbReference type="GO" id="GO:1900029">
    <property type="term" value="P:positive regulation of ruffle assembly"/>
    <property type="evidence" value="ECO:0000250"/>
    <property type="project" value="UniProtKB"/>
</dbReference>
<dbReference type="CDD" id="cd20819">
    <property type="entry name" value="C1_DEF8"/>
    <property type="match status" value="1"/>
</dbReference>
<dbReference type="FunFam" id="3.30.60.20:FF:000042">
    <property type="entry name" value="differentially expressed in FDCP 8 homolog isoform X2"/>
    <property type="match status" value="1"/>
</dbReference>
<dbReference type="Gene3D" id="3.30.60.20">
    <property type="match status" value="1"/>
</dbReference>
<dbReference type="InterPro" id="IPR046349">
    <property type="entry name" value="C1-like_sf"/>
</dbReference>
<dbReference type="InterPro" id="IPR051366">
    <property type="entry name" value="DEF8"/>
</dbReference>
<dbReference type="InterPro" id="IPR047983">
    <property type="entry name" value="DEF8_C1"/>
</dbReference>
<dbReference type="InterPro" id="IPR036280">
    <property type="entry name" value="Multihaem_cyt_sf"/>
</dbReference>
<dbReference type="InterPro" id="IPR002219">
    <property type="entry name" value="PE/DAG-bd"/>
</dbReference>
<dbReference type="InterPro" id="IPR025258">
    <property type="entry name" value="RH_dom"/>
</dbReference>
<dbReference type="PANTHER" id="PTHR12326:SF3">
    <property type="entry name" value="DIFFERENTIALLY EXPRESSED IN FDCP 8 HOMOLOG"/>
    <property type="match status" value="1"/>
</dbReference>
<dbReference type="PANTHER" id="PTHR12326">
    <property type="entry name" value="PLECKSTRIN HOMOLOGY DOMAIN CONTAINING PROTEIN"/>
    <property type="match status" value="1"/>
</dbReference>
<dbReference type="Pfam" id="PF00130">
    <property type="entry name" value="C1_1"/>
    <property type="match status" value="1"/>
</dbReference>
<dbReference type="Pfam" id="PF13901">
    <property type="entry name" value="RH_dom"/>
    <property type="match status" value="1"/>
</dbReference>
<dbReference type="SMART" id="SM00109">
    <property type="entry name" value="C1"/>
    <property type="match status" value="2"/>
</dbReference>
<dbReference type="SMART" id="SM01175">
    <property type="entry name" value="DUF4206"/>
    <property type="match status" value="1"/>
</dbReference>
<dbReference type="SUPFAM" id="SSF57889">
    <property type="entry name" value="Cysteine-rich domain"/>
    <property type="match status" value="1"/>
</dbReference>
<dbReference type="SUPFAM" id="SSF48695">
    <property type="entry name" value="Multiheme cytochromes"/>
    <property type="match status" value="1"/>
</dbReference>
<dbReference type="PROSITE" id="PS00479">
    <property type="entry name" value="ZF_DAG_PE_1"/>
    <property type="match status" value="1"/>
</dbReference>
<dbReference type="PROSITE" id="PS50081">
    <property type="entry name" value="ZF_DAG_PE_2"/>
    <property type="match status" value="1"/>
</dbReference>
<sequence>MEYDDKLVRFRQGHLNPFDKQGGAERHPADSEAQPPKDSSTISPHSIPEYHCPDRVMDLGVSEDHFSRPVGLFLASDIQQLRQAIEECKQEILELPENSDRQKDAVVRLIHLRLKLQELNDPLEDEPNLRILLEHRFYKEKSKSVKHVCDKCSTFIWGLIQTWYTCTGCSYSCHSKCLNLITKPCVRSKVSHQAEYELSICPEAGLDSQDYRCAECRTPISLRAVPSEARQCDYTGQYYCISCHWNDLAVIPARAIHNWDFEPRKVSRCSMRYLALMLGRPVLKLREINPLLFNYVEELVEIRKLRQDILLMKPYFITCKEAMEARLLLQLQDRQHFVENDDMYSLQDLLDISSGRLGCTLTEIHTTFAKHIKLDCERCQAKGFVCELCKEGDILFPFDSHTSVCQDCAAVFHRDCYYDNSTSCPRCMRLSLRKQTQNPEAEP</sequence>
<keyword id="KW-0479">Metal-binding</keyword>
<keyword id="KW-1185">Reference proteome</keyword>
<keyword id="KW-0677">Repeat</keyword>
<keyword id="KW-0862">Zinc</keyword>
<keyword id="KW-0863">Zinc-finger</keyword>